<feature type="transit peptide" description="Mitochondrion" evidence="3">
    <location>
        <begin position="1"/>
        <end position="12"/>
    </location>
</feature>
<feature type="chain" id="PRO_0000042736" description="Iron-sulfur cluster assembly 1 homolog, mitochondrial">
    <location>
        <begin position="13"/>
        <end position="129"/>
    </location>
</feature>
<feature type="binding site" evidence="1">
    <location>
        <position position="57"/>
    </location>
    <ligand>
        <name>Fe cation</name>
        <dbReference type="ChEBI" id="CHEBI:24875"/>
    </ligand>
</feature>
<feature type="binding site" evidence="1">
    <location>
        <position position="121"/>
    </location>
    <ligand>
        <name>Fe cation</name>
        <dbReference type="ChEBI" id="CHEBI:24875"/>
    </ligand>
</feature>
<feature type="binding site" evidence="1">
    <location>
        <position position="123"/>
    </location>
    <ligand>
        <name>Fe cation</name>
        <dbReference type="ChEBI" id="CHEBI:24875"/>
    </ligand>
</feature>
<protein>
    <recommendedName>
        <fullName>Iron-sulfur cluster assembly 1 homolog, mitochondrial</fullName>
    </recommendedName>
    <alternativeName>
        <fullName>HESB-like domain-containing protein 2</fullName>
    </alternativeName>
    <alternativeName>
        <fullName>Iron-sulfur assembly protein IscA</fullName>
    </alternativeName>
</protein>
<accession>Q9D924</accession>
<accession>Q5SZT5</accession>
<reference key="1">
    <citation type="journal article" date="2005" name="Science">
        <title>The transcriptional landscape of the mammalian genome.</title>
        <authorList>
            <person name="Carninci P."/>
            <person name="Kasukawa T."/>
            <person name="Katayama S."/>
            <person name="Gough J."/>
            <person name="Frith M.C."/>
            <person name="Maeda N."/>
            <person name="Oyama R."/>
            <person name="Ravasi T."/>
            <person name="Lenhard B."/>
            <person name="Wells C."/>
            <person name="Kodzius R."/>
            <person name="Shimokawa K."/>
            <person name="Bajic V.B."/>
            <person name="Brenner S.E."/>
            <person name="Batalov S."/>
            <person name="Forrest A.R."/>
            <person name="Zavolan M."/>
            <person name="Davis M.J."/>
            <person name="Wilming L.G."/>
            <person name="Aidinis V."/>
            <person name="Allen J.E."/>
            <person name="Ambesi-Impiombato A."/>
            <person name="Apweiler R."/>
            <person name="Aturaliya R.N."/>
            <person name="Bailey T.L."/>
            <person name="Bansal M."/>
            <person name="Baxter L."/>
            <person name="Beisel K.W."/>
            <person name="Bersano T."/>
            <person name="Bono H."/>
            <person name="Chalk A.M."/>
            <person name="Chiu K.P."/>
            <person name="Choudhary V."/>
            <person name="Christoffels A."/>
            <person name="Clutterbuck D.R."/>
            <person name="Crowe M.L."/>
            <person name="Dalla E."/>
            <person name="Dalrymple B.P."/>
            <person name="de Bono B."/>
            <person name="Della Gatta G."/>
            <person name="di Bernardo D."/>
            <person name="Down T."/>
            <person name="Engstrom P."/>
            <person name="Fagiolini M."/>
            <person name="Faulkner G."/>
            <person name="Fletcher C.F."/>
            <person name="Fukushima T."/>
            <person name="Furuno M."/>
            <person name="Futaki S."/>
            <person name="Gariboldi M."/>
            <person name="Georgii-Hemming P."/>
            <person name="Gingeras T.R."/>
            <person name="Gojobori T."/>
            <person name="Green R.E."/>
            <person name="Gustincich S."/>
            <person name="Harbers M."/>
            <person name="Hayashi Y."/>
            <person name="Hensch T.K."/>
            <person name="Hirokawa N."/>
            <person name="Hill D."/>
            <person name="Huminiecki L."/>
            <person name="Iacono M."/>
            <person name="Ikeo K."/>
            <person name="Iwama A."/>
            <person name="Ishikawa T."/>
            <person name="Jakt M."/>
            <person name="Kanapin A."/>
            <person name="Katoh M."/>
            <person name="Kawasawa Y."/>
            <person name="Kelso J."/>
            <person name="Kitamura H."/>
            <person name="Kitano H."/>
            <person name="Kollias G."/>
            <person name="Krishnan S.P."/>
            <person name="Kruger A."/>
            <person name="Kummerfeld S.K."/>
            <person name="Kurochkin I.V."/>
            <person name="Lareau L.F."/>
            <person name="Lazarevic D."/>
            <person name="Lipovich L."/>
            <person name="Liu J."/>
            <person name="Liuni S."/>
            <person name="McWilliam S."/>
            <person name="Madan Babu M."/>
            <person name="Madera M."/>
            <person name="Marchionni L."/>
            <person name="Matsuda H."/>
            <person name="Matsuzawa S."/>
            <person name="Miki H."/>
            <person name="Mignone F."/>
            <person name="Miyake S."/>
            <person name="Morris K."/>
            <person name="Mottagui-Tabar S."/>
            <person name="Mulder N."/>
            <person name="Nakano N."/>
            <person name="Nakauchi H."/>
            <person name="Ng P."/>
            <person name="Nilsson R."/>
            <person name="Nishiguchi S."/>
            <person name="Nishikawa S."/>
            <person name="Nori F."/>
            <person name="Ohara O."/>
            <person name="Okazaki Y."/>
            <person name="Orlando V."/>
            <person name="Pang K.C."/>
            <person name="Pavan W.J."/>
            <person name="Pavesi G."/>
            <person name="Pesole G."/>
            <person name="Petrovsky N."/>
            <person name="Piazza S."/>
            <person name="Reed J."/>
            <person name="Reid J.F."/>
            <person name="Ring B.Z."/>
            <person name="Ringwald M."/>
            <person name="Rost B."/>
            <person name="Ruan Y."/>
            <person name="Salzberg S.L."/>
            <person name="Sandelin A."/>
            <person name="Schneider C."/>
            <person name="Schoenbach C."/>
            <person name="Sekiguchi K."/>
            <person name="Semple C.A."/>
            <person name="Seno S."/>
            <person name="Sessa L."/>
            <person name="Sheng Y."/>
            <person name="Shibata Y."/>
            <person name="Shimada H."/>
            <person name="Shimada K."/>
            <person name="Silva D."/>
            <person name="Sinclair B."/>
            <person name="Sperling S."/>
            <person name="Stupka E."/>
            <person name="Sugiura K."/>
            <person name="Sultana R."/>
            <person name="Takenaka Y."/>
            <person name="Taki K."/>
            <person name="Tammoja K."/>
            <person name="Tan S.L."/>
            <person name="Tang S."/>
            <person name="Taylor M.S."/>
            <person name="Tegner J."/>
            <person name="Teichmann S.A."/>
            <person name="Ueda H.R."/>
            <person name="van Nimwegen E."/>
            <person name="Verardo R."/>
            <person name="Wei C.L."/>
            <person name="Yagi K."/>
            <person name="Yamanishi H."/>
            <person name="Zabarovsky E."/>
            <person name="Zhu S."/>
            <person name="Zimmer A."/>
            <person name="Hide W."/>
            <person name="Bult C."/>
            <person name="Grimmond S.M."/>
            <person name="Teasdale R.D."/>
            <person name="Liu E.T."/>
            <person name="Brusic V."/>
            <person name="Quackenbush J."/>
            <person name="Wahlestedt C."/>
            <person name="Mattick J.S."/>
            <person name="Hume D.A."/>
            <person name="Kai C."/>
            <person name="Sasaki D."/>
            <person name="Tomaru Y."/>
            <person name="Fukuda S."/>
            <person name="Kanamori-Katayama M."/>
            <person name="Suzuki M."/>
            <person name="Aoki J."/>
            <person name="Arakawa T."/>
            <person name="Iida J."/>
            <person name="Imamura K."/>
            <person name="Itoh M."/>
            <person name="Kato T."/>
            <person name="Kawaji H."/>
            <person name="Kawagashira N."/>
            <person name="Kawashima T."/>
            <person name="Kojima M."/>
            <person name="Kondo S."/>
            <person name="Konno H."/>
            <person name="Nakano K."/>
            <person name="Ninomiya N."/>
            <person name="Nishio T."/>
            <person name="Okada M."/>
            <person name="Plessy C."/>
            <person name="Shibata K."/>
            <person name="Shiraki T."/>
            <person name="Suzuki S."/>
            <person name="Tagami M."/>
            <person name="Waki K."/>
            <person name="Watahiki A."/>
            <person name="Okamura-Oho Y."/>
            <person name="Suzuki H."/>
            <person name="Kawai J."/>
            <person name="Hayashizaki Y."/>
        </authorList>
    </citation>
    <scope>NUCLEOTIDE SEQUENCE [LARGE SCALE MRNA]</scope>
    <source>
        <strain>C57BL/6J</strain>
        <tissue>Amnion</tissue>
        <tissue>Embryo</tissue>
        <tissue>Kidney</tissue>
        <tissue>Pancreas</tissue>
        <tissue>Thymus</tissue>
    </source>
</reference>
<reference key="2">
    <citation type="journal article" date="2009" name="PLoS Biol.">
        <title>Lineage-specific biology revealed by a finished genome assembly of the mouse.</title>
        <authorList>
            <person name="Church D.M."/>
            <person name="Goodstadt L."/>
            <person name="Hillier L.W."/>
            <person name="Zody M.C."/>
            <person name="Goldstein S."/>
            <person name="She X."/>
            <person name="Bult C.J."/>
            <person name="Agarwala R."/>
            <person name="Cherry J.L."/>
            <person name="DiCuccio M."/>
            <person name="Hlavina W."/>
            <person name="Kapustin Y."/>
            <person name="Meric P."/>
            <person name="Maglott D."/>
            <person name="Birtle Z."/>
            <person name="Marques A.C."/>
            <person name="Graves T."/>
            <person name="Zhou S."/>
            <person name="Teague B."/>
            <person name="Potamousis K."/>
            <person name="Churas C."/>
            <person name="Place M."/>
            <person name="Herschleb J."/>
            <person name="Runnheim R."/>
            <person name="Forrest D."/>
            <person name="Amos-Landgraf J."/>
            <person name="Schwartz D.C."/>
            <person name="Cheng Z."/>
            <person name="Lindblad-Toh K."/>
            <person name="Eichler E.E."/>
            <person name="Ponting C.P."/>
        </authorList>
    </citation>
    <scope>NUCLEOTIDE SEQUENCE [LARGE SCALE GENOMIC DNA]</scope>
    <source>
        <strain>C57BL/6J</strain>
    </source>
</reference>
<reference key="3">
    <citation type="journal article" date="2004" name="Genome Res.">
        <title>The status, quality, and expansion of the NIH full-length cDNA project: the Mammalian Gene Collection (MGC).</title>
        <authorList>
            <consortium name="The MGC Project Team"/>
        </authorList>
    </citation>
    <scope>NUCLEOTIDE SEQUENCE [LARGE SCALE MRNA]</scope>
    <source>
        <strain>C57BL/6J</strain>
        <strain>FVB/N</strain>
        <tissue>Brain</tissue>
        <tissue>Mammary tumor</tissue>
    </source>
</reference>
<sequence>MSASLVRATVRAVSKRKLQPTRAALTLTPSAVNKIKQLLKDKPEHVGLKVGVRTRGCNGLSYSLEYTKTKGDSDEEVIQDGVRVFIEKKAQLTLLGTEMDYVEDKLSSEFVFNNPNIKGTCGCGESFHV</sequence>
<name>ISCA1_MOUSE</name>
<comment type="function">
    <text evidence="2">Involved in the maturation of mitochondrial 4Fe-4S proteins functioning late in the iron-sulfur cluster assembly pathway. Probably involved in the binding of an intermediate of Fe/S cluster assembly.</text>
</comment>
<comment type="subunit">
    <text evidence="2">Interacts with CRY2, but not with CRY1 (in vitro).</text>
</comment>
<comment type="subcellular location">
    <subcellularLocation>
        <location evidence="2">Mitochondrion</location>
    </subcellularLocation>
</comment>
<comment type="similarity">
    <text evidence="4">Belongs to the HesB/IscA family.</text>
</comment>
<proteinExistence type="evidence at transcript level"/>
<organism>
    <name type="scientific">Mus musculus</name>
    <name type="common">Mouse</name>
    <dbReference type="NCBI Taxonomy" id="10090"/>
    <lineage>
        <taxon>Eukaryota</taxon>
        <taxon>Metazoa</taxon>
        <taxon>Chordata</taxon>
        <taxon>Craniata</taxon>
        <taxon>Vertebrata</taxon>
        <taxon>Euteleostomi</taxon>
        <taxon>Mammalia</taxon>
        <taxon>Eutheria</taxon>
        <taxon>Euarchontoglires</taxon>
        <taxon>Glires</taxon>
        <taxon>Rodentia</taxon>
        <taxon>Myomorpha</taxon>
        <taxon>Muroidea</taxon>
        <taxon>Muridae</taxon>
        <taxon>Murinae</taxon>
        <taxon>Mus</taxon>
        <taxon>Mus</taxon>
    </lineage>
</organism>
<dbReference type="EMBL" id="AK007415">
    <property type="protein sequence ID" value="BAB25025.1"/>
    <property type="molecule type" value="mRNA"/>
</dbReference>
<dbReference type="EMBL" id="AK045175">
    <property type="protein sequence ID" value="BAC32248.1"/>
    <property type="molecule type" value="mRNA"/>
</dbReference>
<dbReference type="EMBL" id="AK090000">
    <property type="protein sequence ID" value="BAC41037.1"/>
    <property type="molecule type" value="mRNA"/>
</dbReference>
<dbReference type="EMBL" id="AK153820">
    <property type="protein sequence ID" value="BAE32196.1"/>
    <property type="molecule type" value="mRNA"/>
</dbReference>
<dbReference type="EMBL" id="AK169028">
    <property type="protein sequence ID" value="BAE40820.1"/>
    <property type="molecule type" value="mRNA"/>
</dbReference>
<dbReference type="EMBL" id="AC134869">
    <property type="status" value="NOT_ANNOTATED_CDS"/>
    <property type="molecule type" value="Genomic_DNA"/>
</dbReference>
<dbReference type="EMBL" id="BC018547">
    <property type="protein sequence ID" value="AAH18547.1"/>
    <property type="molecule type" value="mRNA"/>
</dbReference>
<dbReference type="EMBL" id="BC085482">
    <property type="protein sequence ID" value="AAH85482.1"/>
    <property type="molecule type" value="mRNA"/>
</dbReference>
<dbReference type="CCDS" id="CCDS26578.1"/>
<dbReference type="RefSeq" id="NP_081197.1">
    <property type="nucleotide sequence ID" value="NM_026921.4"/>
</dbReference>
<dbReference type="SMR" id="Q9D924"/>
<dbReference type="BioGRID" id="213192">
    <property type="interactions" value="9"/>
</dbReference>
<dbReference type="FunCoup" id="Q9D924">
    <property type="interactions" value="2142"/>
</dbReference>
<dbReference type="STRING" id="10090.ENSMUSP00000054858"/>
<dbReference type="iPTMnet" id="Q9D924"/>
<dbReference type="PhosphoSitePlus" id="Q9D924"/>
<dbReference type="SwissPalm" id="Q9D924"/>
<dbReference type="PaxDb" id="10090-ENSMUSP00000054858"/>
<dbReference type="ProteomicsDB" id="269098"/>
<dbReference type="Pumba" id="Q9D924"/>
<dbReference type="DNASU" id="69046"/>
<dbReference type="Ensembl" id="ENSMUST00000057115.7">
    <property type="protein sequence ID" value="ENSMUSP00000054858.7"/>
    <property type="gene ID" value="ENSMUSG00000044792.8"/>
</dbReference>
<dbReference type="GeneID" id="69046"/>
<dbReference type="KEGG" id="mmu:69046"/>
<dbReference type="UCSC" id="uc007qvd.1">
    <property type="organism name" value="mouse"/>
</dbReference>
<dbReference type="AGR" id="MGI:1916296"/>
<dbReference type="CTD" id="81689"/>
<dbReference type="MGI" id="MGI:1916296">
    <property type="gene designation" value="Isca1"/>
</dbReference>
<dbReference type="VEuPathDB" id="HostDB:ENSMUSG00000044792"/>
<dbReference type="eggNOG" id="KOG1120">
    <property type="taxonomic scope" value="Eukaryota"/>
</dbReference>
<dbReference type="GeneTree" id="ENSGT00490000043385"/>
<dbReference type="HOGENOM" id="CLU_069054_4_0_1"/>
<dbReference type="InParanoid" id="Q9D924"/>
<dbReference type="OMA" id="LYIYGMQ"/>
<dbReference type="OrthoDB" id="333486at2759"/>
<dbReference type="PhylomeDB" id="Q9D924"/>
<dbReference type="TreeFam" id="TF314956"/>
<dbReference type="Reactome" id="R-MMU-1362409">
    <property type="pathway name" value="Mitochondrial iron-sulfur cluster biogenesis"/>
</dbReference>
<dbReference type="Reactome" id="R-MMU-9854311">
    <property type="pathway name" value="Maturation of TCA enzymes and regulation of TCA cycle"/>
</dbReference>
<dbReference type="BioGRID-ORCS" id="69046">
    <property type="hits" value="26 hits in 76 CRISPR screens"/>
</dbReference>
<dbReference type="ChiTaRS" id="Isca1">
    <property type="organism name" value="mouse"/>
</dbReference>
<dbReference type="PRO" id="PR:Q9D924"/>
<dbReference type="Proteomes" id="UP000000589">
    <property type="component" value="Chromosome 13"/>
</dbReference>
<dbReference type="RNAct" id="Q9D924">
    <property type="molecule type" value="protein"/>
</dbReference>
<dbReference type="Bgee" id="ENSMUSG00000044792">
    <property type="expression patterns" value="Expressed in bone marrow and 132 other cell types or tissues"/>
</dbReference>
<dbReference type="ExpressionAtlas" id="Q9D924">
    <property type="expression patterns" value="baseline and differential"/>
</dbReference>
<dbReference type="GO" id="GO:0005739">
    <property type="term" value="C:mitochondrion"/>
    <property type="evidence" value="ECO:0007005"/>
    <property type="project" value="MGI"/>
</dbReference>
<dbReference type="GO" id="GO:0051536">
    <property type="term" value="F:iron-sulfur cluster binding"/>
    <property type="evidence" value="ECO:0007669"/>
    <property type="project" value="UniProtKB-KW"/>
</dbReference>
<dbReference type="GO" id="GO:0046872">
    <property type="term" value="F:metal ion binding"/>
    <property type="evidence" value="ECO:0007669"/>
    <property type="project" value="UniProtKB-KW"/>
</dbReference>
<dbReference type="GO" id="GO:0016226">
    <property type="term" value="P:iron-sulfur cluster assembly"/>
    <property type="evidence" value="ECO:0007669"/>
    <property type="project" value="InterPro"/>
</dbReference>
<dbReference type="FunFam" id="2.60.300.12:FF:000001">
    <property type="entry name" value="Iron-binding protein IscA"/>
    <property type="match status" value="1"/>
</dbReference>
<dbReference type="Gene3D" id="2.60.300.12">
    <property type="entry name" value="HesB-like domain"/>
    <property type="match status" value="1"/>
</dbReference>
<dbReference type="InterPro" id="IPR050322">
    <property type="entry name" value="Fe-S_cluster_asmbl/transfer"/>
</dbReference>
<dbReference type="InterPro" id="IPR000361">
    <property type="entry name" value="FeS_biogenesis"/>
</dbReference>
<dbReference type="InterPro" id="IPR016092">
    <property type="entry name" value="FeS_cluster_insertion"/>
</dbReference>
<dbReference type="InterPro" id="IPR017870">
    <property type="entry name" value="FeS_cluster_insertion_CS"/>
</dbReference>
<dbReference type="InterPro" id="IPR035903">
    <property type="entry name" value="HesB-like_dom_sf"/>
</dbReference>
<dbReference type="NCBIfam" id="TIGR00049">
    <property type="entry name" value="iron-sulfur cluster assembly accessory protein"/>
    <property type="match status" value="1"/>
</dbReference>
<dbReference type="PANTHER" id="PTHR10072:SF41">
    <property type="entry name" value="IRON-SULFUR CLUSTER ASSEMBLY 1 HOMOLOG, MITOCHONDRIAL"/>
    <property type="match status" value="1"/>
</dbReference>
<dbReference type="PANTHER" id="PTHR10072">
    <property type="entry name" value="IRON-SULFUR CLUSTER ASSEMBLY PROTEIN"/>
    <property type="match status" value="1"/>
</dbReference>
<dbReference type="Pfam" id="PF01521">
    <property type="entry name" value="Fe-S_biosyn"/>
    <property type="match status" value="1"/>
</dbReference>
<dbReference type="SUPFAM" id="SSF89360">
    <property type="entry name" value="HesB-like domain"/>
    <property type="match status" value="1"/>
</dbReference>
<dbReference type="PROSITE" id="PS01152">
    <property type="entry name" value="HESB"/>
    <property type="match status" value="1"/>
</dbReference>
<evidence type="ECO:0000250" key="1">
    <source>
        <dbReference type="UniProtKB" id="P0AAC8"/>
    </source>
</evidence>
<evidence type="ECO:0000250" key="2">
    <source>
        <dbReference type="UniProtKB" id="Q9BUE6"/>
    </source>
</evidence>
<evidence type="ECO:0000255" key="3"/>
<evidence type="ECO:0000305" key="4"/>
<gene>
    <name type="primary">Isca1</name>
    <name type="synonym">Hbld2</name>
</gene>
<keyword id="KW-0408">Iron</keyword>
<keyword id="KW-0411">Iron-sulfur</keyword>
<keyword id="KW-0479">Metal-binding</keyword>
<keyword id="KW-0496">Mitochondrion</keyword>
<keyword id="KW-1185">Reference proteome</keyword>
<keyword id="KW-0809">Transit peptide</keyword>